<dbReference type="EMBL" id="AF509888">
    <property type="protein sequence ID" value="AAN64032.1"/>
    <property type="molecule type" value="mRNA"/>
</dbReference>
<dbReference type="EMBL" id="AF509890">
    <property type="protein sequence ID" value="AAN64034.1"/>
    <property type="molecule type" value="Genomic_DNA"/>
</dbReference>
<dbReference type="EMBL" id="AK002434">
    <property type="protein sequence ID" value="BAB22099.1"/>
    <property type="molecule type" value="mRNA"/>
</dbReference>
<dbReference type="EMBL" id="AK137217">
    <property type="protein sequence ID" value="BAE23275.1"/>
    <property type="molecule type" value="mRNA"/>
</dbReference>
<dbReference type="EMBL" id="AK146914">
    <property type="protein sequence ID" value="BAE27526.1"/>
    <property type="molecule type" value="mRNA"/>
</dbReference>
<dbReference type="EMBL" id="BC030403">
    <property type="protein sequence ID" value="AAH30403.1"/>
    <property type="molecule type" value="mRNA"/>
</dbReference>
<dbReference type="CCDS" id="CCDS27851.1"/>
<dbReference type="RefSeq" id="NP_149064.1">
    <property type="nucleotide sequence ID" value="NM_033073.3"/>
</dbReference>
<dbReference type="SMR" id="Q9DCV7"/>
<dbReference type="BioGRID" id="225484">
    <property type="interactions" value="4"/>
</dbReference>
<dbReference type="FunCoup" id="Q9DCV7">
    <property type="interactions" value="39"/>
</dbReference>
<dbReference type="IntAct" id="Q9DCV7">
    <property type="interactions" value="3"/>
</dbReference>
<dbReference type="MINT" id="Q9DCV7"/>
<dbReference type="STRING" id="10090.ENSMUSP00000069900"/>
<dbReference type="GlyGen" id="Q9DCV7">
    <property type="glycosylation" value="1 site"/>
</dbReference>
<dbReference type="iPTMnet" id="Q9DCV7"/>
<dbReference type="PhosphoSitePlus" id="Q9DCV7"/>
<dbReference type="jPOST" id="Q9DCV7"/>
<dbReference type="PaxDb" id="10090-ENSMUSP00000069900"/>
<dbReference type="PeptideAtlas" id="Q9DCV7"/>
<dbReference type="ProteomicsDB" id="268946"/>
<dbReference type="Antibodypedia" id="1535">
    <property type="antibodies" value="2639 antibodies from 57 providers"/>
</dbReference>
<dbReference type="DNASU" id="110310"/>
<dbReference type="Ensembl" id="ENSMUST00000068904.9">
    <property type="protein sequence ID" value="ENSMUSP00000069900.9"/>
    <property type="gene ID" value="ENSMUSG00000023039.18"/>
</dbReference>
<dbReference type="GeneID" id="110310"/>
<dbReference type="KEGG" id="mmu:110310"/>
<dbReference type="UCSC" id="uc007xtd.2">
    <property type="organism name" value="mouse"/>
</dbReference>
<dbReference type="AGR" id="MGI:96704"/>
<dbReference type="CTD" id="3855"/>
<dbReference type="MGI" id="MGI:96704">
    <property type="gene designation" value="Krt7"/>
</dbReference>
<dbReference type="VEuPathDB" id="HostDB:ENSMUSG00000023039"/>
<dbReference type="eggNOG" id="ENOG502QURK">
    <property type="taxonomic scope" value="Eukaryota"/>
</dbReference>
<dbReference type="GeneTree" id="ENSGT00940000161303"/>
<dbReference type="HOGENOM" id="CLU_012560_5_4_1"/>
<dbReference type="InParanoid" id="Q9DCV7"/>
<dbReference type="OMA" id="QRSKQEM"/>
<dbReference type="OrthoDB" id="2441647at2759"/>
<dbReference type="PhylomeDB" id="Q9DCV7"/>
<dbReference type="TreeFam" id="TF317854"/>
<dbReference type="Reactome" id="R-MMU-6805567">
    <property type="pathway name" value="Keratinization"/>
</dbReference>
<dbReference type="Reactome" id="R-MMU-6809371">
    <property type="pathway name" value="Formation of the cornified envelope"/>
</dbReference>
<dbReference type="BioGRID-ORCS" id="110310">
    <property type="hits" value="1 hit in 81 CRISPR screens"/>
</dbReference>
<dbReference type="ChiTaRS" id="Krt7">
    <property type="organism name" value="mouse"/>
</dbReference>
<dbReference type="PRO" id="PR:Q9DCV7"/>
<dbReference type="Proteomes" id="UP000000589">
    <property type="component" value="Chromosome 15"/>
</dbReference>
<dbReference type="RNAct" id="Q9DCV7">
    <property type="molecule type" value="protein"/>
</dbReference>
<dbReference type="Bgee" id="ENSMUSG00000023039">
    <property type="expression patterns" value="Expressed in urinary bladder urothelium and 191 other cell types or tissues"/>
</dbReference>
<dbReference type="ExpressionAtlas" id="Q9DCV7">
    <property type="expression patterns" value="baseline and differential"/>
</dbReference>
<dbReference type="GO" id="GO:0005829">
    <property type="term" value="C:cytosol"/>
    <property type="evidence" value="ECO:0007669"/>
    <property type="project" value="Ensembl"/>
</dbReference>
<dbReference type="GO" id="GO:0045095">
    <property type="term" value="C:keratin filament"/>
    <property type="evidence" value="ECO:0007669"/>
    <property type="project" value="InterPro"/>
</dbReference>
<dbReference type="FunFam" id="1.20.5.1160:FF:000001">
    <property type="entry name" value="Keratin type II"/>
    <property type="match status" value="1"/>
</dbReference>
<dbReference type="FunFam" id="1.20.5.170:FF:000004">
    <property type="entry name" value="Keratin, type II cytoskeletal 5"/>
    <property type="match status" value="1"/>
</dbReference>
<dbReference type="FunFam" id="1.20.5.500:FF:000001">
    <property type="entry name" value="Type II keratin 23"/>
    <property type="match status" value="1"/>
</dbReference>
<dbReference type="Gene3D" id="1.20.5.170">
    <property type="match status" value="1"/>
</dbReference>
<dbReference type="Gene3D" id="1.20.5.500">
    <property type="entry name" value="Single helix bin"/>
    <property type="match status" value="1"/>
</dbReference>
<dbReference type="Gene3D" id="1.20.5.1160">
    <property type="entry name" value="Vasodilator-stimulated phosphoprotein"/>
    <property type="match status" value="1"/>
</dbReference>
<dbReference type="InterPro" id="IPR018039">
    <property type="entry name" value="IF_conserved"/>
</dbReference>
<dbReference type="InterPro" id="IPR039008">
    <property type="entry name" value="IF_rod_dom"/>
</dbReference>
<dbReference type="InterPro" id="IPR032444">
    <property type="entry name" value="Keratin_2_head"/>
</dbReference>
<dbReference type="InterPro" id="IPR003054">
    <property type="entry name" value="Keratin_II"/>
</dbReference>
<dbReference type="PANTHER" id="PTHR45616">
    <property type="entry name" value="GATA-TYPE DOMAIN-CONTAINING PROTEIN"/>
    <property type="match status" value="1"/>
</dbReference>
<dbReference type="PANTHER" id="PTHR45616:SF21">
    <property type="entry name" value="KERATIN, TYPE II CYTOSKELETAL 7"/>
    <property type="match status" value="1"/>
</dbReference>
<dbReference type="Pfam" id="PF00038">
    <property type="entry name" value="Filament"/>
    <property type="match status" value="1"/>
</dbReference>
<dbReference type="Pfam" id="PF16208">
    <property type="entry name" value="Keratin_2_head"/>
    <property type="match status" value="1"/>
</dbReference>
<dbReference type="PRINTS" id="PR01276">
    <property type="entry name" value="TYPE2KERATIN"/>
</dbReference>
<dbReference type="SMART" id="SM01391">
    <property type="entry name" value="Filament"/>
    <property type="match status" value="1"/>
</dbReference>
<dbReference type="SUPFAM" id="SSF64593">
    <property type="entry name" value="Intermediate filament protein, coiled coil region"/>
    <property type="match status" value="3"/>
</dbReference>
<dbReference type="SUPFAM" id="SSF46579">
    <property type="entry name" value="Prefoldin"/>
    <property type="match status" value="1"/>
</dbReference>
<dbReference type="PROSITE" id="PS00226">
    <property type="entry name" value="IF_ROD_1"/>
    <property type="match status" value="1"/>
</dbReference>
<dbReference type="PROSITE" id="PS51842">
    <property type="entry name" value="IF_ROD_2"/>
    <property type="match status" value="1"/>
</dbReference>
<keyword id="KW-0007">Acetylation</keyword>
<keyword id="KW-0175">Coiled coil</keyword>
<keyword id="KW-0903">Direct protein sequencing</keyword>
<keyword id="KW-0325">Glycoprotein</keyword>
<keyword id="KW-0403">Intermediate filament</keyword>
<keyword id="KW-1017">Isopeptide bond</keyword>
<keyword id="KW-0416">Keratin</keyword>
<keyword id="KW-0488">Methylation</keyword>
<keyword id="KW-0597">Phosphoprotein</keyword>
<keyword id="KW-1185">Reference proteome</keyword>
<keyword id="KW-0832">Ubl conjugation</keyword>
<comment type="function">
    <text evidence="1">Blocks interferon-dependent interphase and stimulates DNA synthesis in cells.</text>
</comment>
<comment type="subunit">
    <text evidence="1">Heterotetramer of two type I and two type II keratins. Interacts with eukaryotic translation initiator factor 3 (eIF3) subunit EIF3S10. Interacts with GPER1 (By similarity).</text>
</comment>
<comment type="tissue specificity">
    <text evidence="5">Expressed in most simple epithelia tested including liver, lactating mammary gland, lung, kidney, stomach, duodenum, colon, oviduct, uterus, pancreas, epididymis, prostate, preputial gland and mesothelium, and in most stratified epithelia tested including dorsal skin, paw/toe, tail, tongue, cervix, forestomach, and bladder. Also expressed in Henle layer of the inner root sheath of whisker follicle.</text>
</comment>
<comment type="PTM">
    <text evidence="2">Arg-15 is dimethylated, probably to asymmetric dimethylarginine.</text>
</comment>
<comment type="miscellaneous">
    <text evidence="6">There are two types of cytoskeletal and microfibrillar keratin: I (acidic; 40-55 kDa) and II (neutral to basic; 56-70 kDa).</text>
</comment>
<comment type="similarity">
    <text evidence="4">Belongs to the intermediate filament family.</text>
</comment>
<organism>
    <name type="scientific">Mus musculus</name>
    <name type="common">Mouse</name>
    <dbReference type="NCBI Taxonomy" id="10090"/>
    <lineage>
        <taxon>Eukaryota</taxon>
        <taxon>Metazoa</taxon>
        <taxon>Chordata</taxon>
        <taxon>Craniata</taxon>
        <taxon>Vertebrata</taxon>
        <taxon>Euteleostomi</taxon>
        <taxon>Mammalia</taxon>
        <taxon>Eutheria</taxon>
        <taxon>Euarchontoglires</taxon>
        <taxon>Glires</taxon>
        <taxon>Rodentia</taxon>
        <taxon>Myomorpha</taxon>
        <taxon>Muroidea</taxon>
        <taxon>Muridae</taxon>
        <taxon>Murinae</taxon>
        <taxon>Mus</taxon>
        <taxon>Mus</taxon>
    </lineage>
</organism>
<sequence length="457" mass="50709">MSIHFSSRSTAYPGRGAQVRLSSGRASFGSRSLYGLGSSRPRVAVRSAYGGPVGAGIREITINQSLLAPLSVDIDPTIQQVRQEEREQIKTLNNKFASFIDKVRFLEQQNKMLETKWALLQEQKSAKSSQLPRIFEAQIAGLRQQLETLQLDGGRLEVELRNMQDVVEDFKNKYEEEINRRTAAENEFVLLKKDVDAAYTNKVELEAKADSLQDEINFLKTLHETELAELQSQISDTSVVLSMDNSRSLDLDGIIADVKAQYEEMANHSRAEAEAWYQTKFETLQAQAGKHGDDLRNTRNEIAEMNRSIQRLQAEIDTLKNQRAKLESSIAEAEEQGELAIKDAHAKQGELEAALQKAKQDVARQLREYQELLNTKLALDIEIATYRKLLEGEESRLSGDGMGPVNISVVNSTGGNGGKLIFGGTMGSNALSFSGGPGALRAYSIKTTSTTRRGTHN</sequence>
<gene>
    <name evidence="12" type="primary">Krt7</name>
    <name evidence="12" type="synonym">Krt2-7</name>
</gene>
<feature type="initiator methionine" description="Removed" evidence="2">
    <location>
        <position position="1"/>
    </location>
</feature>
<feature type="chain" id="PRO_0000307635" description="Keratin, type II cytoskeletal 7">
    <location>
        <begin position="2"/>
        <end position="457"/>
    </location>
</feature>
<feature type="domain" description="IF rod" evidence="4">
    <location>
        <begin position="85"/>
        <end position="397"/>
    </location>
</feature>
<feature type="region of interest" description="Head" evidence="3">
    <location>
        <begin position="2"/>
        <end position="84"/>
    </location>
</feature>
<feature type="region of interest" description="Coil 1A" evidence="3">
    <location>
        <begin position="84"/>
        <end position="120"/>
    </location>
</feature>
<feature type="region of interest" description="Linker 1" evidence="3">
    <location>
        <begin position="121"/>
        <end position="138"/>
    </location>
</feature>
<feature type="region of interest" description="Coil 1B" evidence="3">
    <location>
        <begin position="139"/>
        <end position="230"/>
    </location>
</feature>
<feature type="region of interest" description="Linker 12" evidence="3">
    <location>
        <begin position="231"/>
        <end position="254"/>
    </location>
</feature>
<feature type="region of interest" description="Coil 2" evidence="3">
    <location>
        <begin position="255"/>
        <end position="393"/>
    </location>
</feature>
<feature type="region of interest" description="Tail" evidence="3">
    <location>
        <begin position="394"/>
        <end position="457"/>
    </location>
</feature>
<feature type="site" description="Stutter" evidence="3">
    <location>
        <position position="337"/>
    </location>
</feature>
<feature type="modified residue" description="N-acetylserine" evidence="2">
    <location>
        <position position="2"/>
    </location>
</feature>
<feature type="modified residue" description="Phosphoserine" evidence="2">
    <location>
        <position position="2"/>
    </location>
</feature>
<feature type="modified residue" description="Dimethylated arginine; alternate" evidence="2">
    <location>
        <position position="15"/>
    </location>
</feature>
<feature type="modified residue" description="Omega-N-methylarginine; alternate" evidence="2">
    <location>
        <position position="15"/>
    </location>
</feature>
<feature type="modified residue" description="Phosphoserine" evidence="2">
    <location>
        <position position="47"/>
    </location>
</feature>
<feature type="modified residue" description="Phosphoserine" evidence="2">
    <location>
        <position position="65"/>
    </location>
</feature>
<feature type="modified residue" description="Phosphothreonine" evidence="2">
    <location>
        <position position="91"/>
    </location>
</feature>
<feature type="modified residue" description="N6-acetyllysine" evidence="2">
    <location>
        <position position="173"/>
    </location>
</feature>
<feature type="modified residue" description="Phosphoserine" evidence="13">
    <location>
        <position position="211"/>
    </location>
</feature>
<feature type="modified residue" description="Phosphoserine" evidence="2">
    <location>
        <position position="246"/>
    </location>
</feature>
<feature type="modified residue" description="Phosphoserine" evidence="13">
    <location>
        <position position="248"/>
    </location>
</feature>
<feature type="modified residue" description="Phosphothreonine" evidence="2">
    <location>
        <position position="283"/>
    </location>
</feature>
<feature type="glycosylation site" description="O-linked (GlcNAc) serine" evidence="2">
    <location>
        <position position="7"/>
    </location>
</feature>
<feature type="cross-link" description="Glycyl lysine isopeptide (Lys-Gly) (interchain with G-Cter in SUMO2)" evidence="2">
    <location>
        <position position="124"/>
    </location>
</feature>
<feature type="cross-link" description="Glycyl lysine isopeptide (Lys-Gly) (interchain with G-Cter in SUMO2)" evidence="2">
    <location>
        <position position="259"/>
    </location>
</feature>
<feature type="cross-link" description="Glycyl lysine isopeptide (Lys-Gly) (interchain with G-Cter in SUMO2)" evidence="2">
    <location>
        <position position="280"/>
    </location>
</feature>
<feature type="cross-link" description="Glycyl lysine isopeptide (Lys-Gly) (interchain with G-Cter in SUMO2)" evidence="2">
    <location>
        <position position="290"/>
    </location>
</feature>
<feature type="cross-link" description="Glycyl lysine isopeptide (Lys-Gly) (interchain with G-Cter in SUMO2)" evidence="2">
    <location>
        <position position="325"/>
    </location>
</feature>
<protein>
    <recommendedName>
        <fullName>Keratin, type II cytoskeletal 7</fullName>
    </recommendedName>
    <alternativeName>
        <fullName>Cytokeratin-7</fullName>
        <shortName>CK-7</shortName>
    </alternativeName>
    <alternativeName>
        <fullName>Keratin-7</fullName>
        <shortName>K7</shortName>
    </alternativeName>
    <alternativeName>
        <fullName>Type-II keratin Kb7</fullName>
    </alternativeName>
</protein>
<proteinExistence type="evidence at protein level"/>
<name>K2C7_MOUSE</name>
<reference evidence="6 8" key="1">
    <citation type="journal article" date="2002" name="Biochem. Biophys. Res. Commun.">
        <title>Cloning of human, murine, and marsupial keratin 7 and a survey of K7 expression in the mouse.</title>
        <authorList>
            <person name="Smith F.J.D."/>
            <person name="Porter R.M."/>
            <person name="Corden L.D."/>
            <person name="Lunny D.P."/>
            <person name="Lane E.B."/>
            <person name="McLean W.H.I."/>
        </authorList>
    </citation>
    <scope>NUCLEOTIDE SEQUENCE [GENOMIC DNA / MRNA]</scope>
    <scope>TISSUE SPECIFICITY</scope>
    <source>
        <strain evidence="8">129/SvJ</strain>
        <tissue evidence="5">Mammary gland</tissue>
    </source>
</reference>
<reference evidence="9" key="2">
    <citation type="journal article" date="2005" name="Science">
        <title>The transcriptional landscape of the mammalian genome.</title>
        <authorList>
            <person name="Carninci P."/>
            <person name="Kasukawa T."/>
            <person name="Katayama S."/>
            <person name="Gough J."/>
            <person name="Frith M.C."/>
            <person name="Maeda N."/>
            <person name="Oyama R."/>
            <person name="Ravasi T."/>
            <person name="Lenhard B."/>
            <person name="Wells C."/>
            <person name="Kodzius R."/>
            <person name="Shimokawa K."/>
            <person name="Bajic V.B."/>
            <person name="Brenner S.E."/>
            <person name="Batalov S."/>
            <person name="Forrest A.R."/>
            <person name="Zavolan M."/>
            <person name="Davis M.J."/>
            <person name="Wilming L.G."/>
            <person name="Aidinis V."/>
            <person name="Allen J.E."/>
            <person name="Ambesi-Impiombato A."/>
            <person name="Apweiler R."/>
            <person name="Aturaliya R.N."/>
            <person name="Bailey T.L."/>
            <person name="Bansal M."/>
            <person name="Baxter L."/>
            <person name="Beisel K.W."/>
            <person name="Bersano T."/>
            <person name="Bono H."/>
            <person name="Chalk A.M."/>
            <person name="Chiu K.P."/>
            <person name="Choudhary V."/>
            <person name="Christoffels A."/>
            <person name="Clutterbuck D.R."/>
            <person name="Crowe M.L."/>
            <person name="Dalla E."/>
            <person name="Dalrymple B.P."/>
            <person name="de Bono B."/>
            <person name="Della Gatta G."/>
            <person name="di Bernardo D."/>
            <person name="Down T."/>
            <person name="Engstrom P."/>
            <person name="Fagiolini M."/>
            <person name="Faulkner G."/>
            <person name="Fletcher C.F."/>
            <person name="Fukushima T."/>
            <person name="Furuno M."/>
            <person name="Futaki S."/>
            <person name="Gariboldi M."/>
            <person name="Georgii-Hemming P."/>
            <person name="Gingeras T.R."/>
            <person name="Gojobori T."/>
            <person name="Green R.E."/>
            <person name="Gustincich S."/>
            <person name="Harbers M."/>
            <person name="Hayashi Y."/>
            <person name="Hensch T.K."/>
            <person name="Hirokawa N."/>
            <person name="Hill D."/>
            <person name="Huminiecki L."/>
            <person name="Iacono M."/>
            <person name="Ikeo K."/>
            <person name="Iwama A."/>
            <person name="Ishikawa T."/>
            <person name="Jakt M."/>
            <person name="Kanapin A."/>
            <person name="Katoh M."/>
            <person name="Kawasawa Y."/>
            <person name="Kelso J."/>
            <person name="Kitamura H."/>
            <person name="Kitano H."/>
            <person name="Kollias G."/>
            <person name="Krishnan S.P."/>
            <person name="Kruger A."/>
            <person name="Kummerfeld S.K."/>
            <person name="Kurochkin I.V."/>
            <person name="Lareau L.F."/>
            <person name="Lazarevic D."/>
            <person name="Lipovich L."/>
            <person name="Liu J."/>
            <person name="Liuni S."/>
            <person name="McWilliam S."/>
            <person name="Madan Babu M."/>
            <person name="Madera M."/>
            <person name="Marchionni L."/>
            <person name="Matsuda H."/>
            <person name="Matsuzawa S."/>
            <person name="Miki H."/>
            <person name="Mignone F."/>
            <person name="Miyake S."/>
            <person name="Morris K."/>
            <person name="Mottagui-Tabar S."/>
            <person name="Mulder N."/>
            <person name="Nakano N."/>
            <person name="Nakauchi H."/>
            <person name="Ng P."/>
            <person name="Nilsson R."/>
            <person name="Nishiguchi S."/>
            <person name="Nishikawa S."/>
            <person name="Nori F."/>
            <person name="Ohara O."/>
            <person name="Okazaki Y."/>
            <person name="Orlando V."/>
            <person name="Pang K.C."/>
            <person name="Pavan W.J."/>
            <person name="Pavesi G."/>
            <person name="Pesole G."/>
            <person name="Petrovsky N."/>
            <person name="Piazza S."/>
            <person name="Reed J."/>
            <person name="Reid J.F."/>
            <person name="Ring B.Z."/>
            <person name="Ringwald M."/>
            <person name="Rost B."/>
            <person name="Ruan Y."/>
            <person name="Salzberg S.L."/>
            <person name="Sandelin A."/>
            <person name="Schneider C."/>
            <person name="Schoenbach C."/>
            <person name="Sekiguchi K."/>
            <person name="Semple C.A."/>
            <person name="Seno S."/>
            <person name="Sessa L."/>
            <person name="Sheng Y."/>
            <person name="Shibata Y."/>
            <person name="Shimada H."/>
            <person name="Shimada K."/>
            <person name="Silva D."/>
            <person name="Sinclair B."/>
            <person name="Sperling S."/>
            <person name="Stupka E."/>
            <person name="Sugiura K."/>
            <person name="Sultana R."/>
            <person name="Takenaka Y."/>
            <person name="Taki K."/>
            <person name="Tammoja K."/>
            <person name="Tan S.L."/>
            <person name="Tang S."/>
            <person name="Taylor M.S."/>
            <person name="Tegner J."/>
            <person name="Teichmann S.A."/>
            <person name="Ueda H.R."/>
            <person name="van Nimwegen E."/>
            <person name="Verardo R."/>
            <person name="Wei C.L."/>
            <person name="Yagi K."/>
            <person name="Yamanishi H."/>
            <person name="Zabarovsky E."/>
            <person name="Zhu S."/>
            <person name="Zimmer A."/>
            <person name="Hide W."/>
            <person name="Bult C."/>
            <person name="Grimmond S.M."/>
            <person name="Teasdale R.D."/>
            <person name="Liu E.T."/>
            <person name="Brusic V."/>
            <person name="Quackenbush J."/>
            <person name="Wahlestedt C."/>
            <person name="Mattick J.S."/>
            <person name="Hume D.A."/>
            <person name="Kai C."/>
            <person name="Sasaki D."/>
            <person name="Tomaru Y."/>
            <person name="Fukuda S."/>
            <person name="Kanamori-Katayama M."/>
            <person name="Suzuki M."/>
            <person name="Aoki J."/>
            <person name="Arakawa T."/>
            <person name="Iida J."/>
            <person name="Imamura K."/>
            <person name="Itoh M."/>
            <person name="Kato T."/>
            <person name="Kawaji H."/>
            <person name="Kawagashira N."/>
            <person name="Kawashima T."/>
            <person name="Kojima M."/>
            <person name="Kondo S."/>
            <person name="Konno H."/>
            <person name="Nakano K."/>
            <person name="Ninomiya N."/>
            <person name="Nishio T."/>
            <person name="Okada M."/>
            <person name="Plessy C."/>
            <person name="Shibata K."/>
            <person name="Shiraki T."/>
            <person name="Suzuki S."/>
            <person name="Tagami M."/>
            <person name="Waki K."/>
            <person name="Watahiki A."/>
            <person name="Okamura-Oho Y."/>
            <person name="Suzuki H."/>
            <person name="Kawai J."/>
            <person name="Hayashizaki Y."/>
        </authorList>
    </citation>
    <scope>NUCLEOTIDE SEQUENCE [LARGE SCALE MRNA]</scope>
    <source>
        <strain evidence="9">C57BL/6J</strain>
        <tissue evidence="11">Amnion</tissue>
        <tissue evidence="9">Kidney</tissue>
        <tissue evidence="10">Urinary bladder</tissue>
    </source>
</reference>
<reference evidence="7" key="3">
    <citation type="journal article" date="2004" name="Genome Res.">
        <title>The status, quality, and expansion of the NIH full-length cDNA project: the Mammalian Gene Collection (MGC).</title>
        <authorList>
            <consortium name="The MGC Project Team"/>
        </authorList>
    </citation>
    <scope>NUCLEOTIDE SEQUENCE [LARGE SCALE MRNA]</scope>
    <source>
        <strain evidence="7">FVB/N</strain>
        <tissue evidence="7">Mammary tumor</tissue>
    </source>
</reference>
<reference key="4">
    <citation type="submission" date="2009-01" db="UniProtKB">
        <authorList>
            <person name="Lubec G."/>
            <person name="Sunyer B."/>
            <person name="Chen W.-Q."/>
        </authorList>
    </citation>
    <scope>PROTEIN SEQUENCE OF 368-387</scope>
    <scope>IDENTIFICATION BY MASS SPECTROMETRY</scope>
    <source>
        <strain>OF1</strain>
        <tissue>Hippocampus</tissue>
    </source>
</reference>
<reference key="5">
    <citation type="journal article" date="2010" name="Cell">
        <title>A tissue-specific atlas of mouse protein phosphorylation and expression.</title>
        <authorList>
            <person name="Huttlin E.L."/>
            <person name="Jedrychowski M.P."/>
            <person name="Elias J.E."/>
            <person name="Goswami T."/>
            <person name="Rad R."/>
            <person name="Beausoleil S.A."/>
            <person name="Villen J."/>
            <person name="Haas W."/>
            <person name="Sowa M.E."/>
            <person name="Gygi S.P."/>
        </authorList>
    </citation>
    <scope>PHOSPHORYLATION [LARGE SCALE ANALYSIS] AT SER-211 AND SER-248</scope>
    <scope>IDENTIFICATION BY MASS SPECTROMETRY [LARGE SCALE ANALYSIS]</scope>
    <source>
        <tissue>Kidney</tissue>
        <tissue>Lung</tissue>
    </source>
</reference>
<accession>Q9DCV7</accession>
<evidence type="ECO:0000250" key="1"/>
<evidence type="ECO:0000250" key="2">
    <source>
        <dbReference type="UniProtKB" id="P08729"/>
    </source>
</evidence>
<evidence type="ECO:0000255" key="3"/>
<evidence type="ECO:0000255" key="4">
    <source>
        <dbReference type="PROSITE-ProRule" id="PRU01188"/>
    </source>
</evidence>
<evidence type="ECO:0000269" key="5">
    <source>
    </source>
</evidence>
<evidence type="ECO:0000305" key="6"/>
<evidence type="ECO:0000312" key="7">
    <source>
        <dbReference type="EMBL" id="AAH30403.1"/>
    </source>
</evidence>
<evidence type="ECO:0000312" key="8">
    <source>
        <dbReference type="EMBL" id="AAN64034.1"/>
    </source>
</evidence>
<evidence type="ECO:0000312" key="9">
    <source>
        <dbReference type="EMBL" id="BAB22099.1"/>
    </source>
</evidence>
<evidence type="ECO:0000312" key="10">
    <source>
        <dbReference type="EMBL" id="BAE23275.1"/>
    </source>
</evidence>
<evidence type="ECO:0000312" key="11">
    <source>
        <dbReference type="EMBL" id="BAE27526.1"/>
    </source>
</evidence>
<evidence type="ECO:0000312" key="12">
    <source>
        <dbReference type="MGI" id="MGI:96704"/>
    </source>
</evidence>
<evidence type="ECO:0007744" key="13">
    <source>
    </source>
</evidence>